<gene>
    <name evidence="1" type="primary">rnj</name>
    <name type="ordered locus">MJ0861</name>
</gene>
<comment type="function">
    <text evidence="1 2 4">A 5'-3' exoribonuclease with a strong reference for 5'-monophosphorylated RNA and no endoribonuclease activty (PubMed:21955587). Also has robust 5'-'3 nuclease activity on single-stranded DNA (exodeoxyribonuclease, exoDNase) (PubMed:21955587). May be involved in RNA degradation (Probable).</text>
</comment>
<comment type="cofactor">
    <cofactor evidence="1">
        <name>Zn(2+)</name>
        <dbReference type="ChEBI" id="CHEBI:29105"/>
    </cofactor>
    <text evidence="1 2">Binds 2 Zn(2+) ions per subunit. It is not clear if Zn(2+) or Mg(2+) is physiologically important (By similarity). Optimal NaCl concentration is 100 mM for nuclease activity on RNA (PubMed:21955587).</text>
</comment>
<comment type="activity regulation">
    <text evidence="2">Inhibited by imidazole (PubMed:21955587).</text>
</comment>
<comment type="biophysicochemical properties">
    <temperatureDependence>
        <text evidence="2">Optimum temperature is 60 degrees Celsius for nuclease activity on RNA (PubMed:21955587).</text>
    </temperatureDependence>
</comment>
<comment type="subunit">
    <text evidence="1 4">Forms homodimers on heating to 60 degrees Celsius which may be the active form (PubMed:21955587).</text>
</comment>
<comment type="subcellular location">
    <subcellularLocation>
        <location evidence="1">Cytoplasm</location>
    </subcellularLocation>
</comment>
<comment type="similarity">
    <text evidence="1 4">Belongs to the metallo-beta-lactamase superfamily. RNA-metabolizing metallo-beta-lactamase-like family. Archaeal RNase J subfamily.</text>
</comment>
<protein>
    <recommendedName>
        <fullName evidence="1">Ribonuclease J</fullName>
        <shortName evidence="1">RNase J</shortName>
        <ecNumber evidence="1 2">3.1.-.-</ecNumber>
    </recommendedName>
    <alternativeName>
        <fullName evidence="3">RNase J3</fullName>
    </alternativeName>
</protein>
<accession>Q58271</accession>
<sequence length="448" mass="50062">MKLEIIAIGGYEEVGRNMTAVNVDGEIIILDMGIRLDRVLIHEDTDISKLHSLELIEKGIIPNDTVMKNIEGEVKAIVLSHGHLDHIGAVPKLAHRYNAPIIGTPYTIELVKREILSEKKFDVRNPLIVLNAGESIDLTPNITLEFIRITHSIPDSVLPVLHTPYGSIVYGNDFKFDNFPVVGERPDYRAIKKVGKNGVLCFISETTRINHEGKTPPEIIASGLLKNDLLAADNDKHGIIVTTFSSHIARIKSITDIAEKMGRTPVLLGRSMMRFCGIAQDIGLVKFPEDLRIYGDPSSIEMALKNIVKEGKEKYLIIATGHQGEEGAVLSRMATNKTPYKFEKYDCVVFSADPIPNPMNAAQRYMLESRLKLLGVRIFKGAHVSGHAAKEDHRDMLRWLNPEHIIPSHGDFNLTAEYTKLAEEEGYRLGEDVHLLRNGQCLSFERII</sequence>
<proteinExistence type="evidence at protein level"/>
<reference key="1">
    <citation type="journal article" date="1996" name="Science">
        <title>Complete genome sequence of the methanogenic archaeon, Methanococcus jannaschii.</title>
        <authorList>
            <person name="Bult C.J."/>
            <person name="White O."/>
            <person name="Olsen G.J."/>
            <person name="Zhou L."/>
            <person name="Fleischmann R.D."/>
            <person name="Sutton G.G."/>
            <person name="Blake J.A."/>
            <person name="FitzGerald L.M."/>
            <person name="Clayton R.A."/>
            <person name="Gocayne J.D."/>
            <person name="Kerlavage A.R."/>
            <person name="Dougherty B.A."/>
            <person name="Tomb J.-F."/>
            <person name="Adams M.D."/>
            <person name="Reich C.I."/>
            <person name="Overbeek R."/>
            <person name="Kirkness E.F."/>
            <person name="Weinstock K.G."/>
            <person name="Merrick J.M."/>
            <person name="Glodek A."/>
            <person name="Scott J.L."/>
            <person name="Geoghagen N.S.M."/>
            <person name="Weidman J.F."/>
            <person name="Fuhrmann J.L."/>
            <person name="Nguyen D."/>
            <person name="Utterback T.R."/>
            <person name="Kelley J.M."/>
            <person name="Peterson J.D."/>
            <person name="Sadow P.W."/>
            <person name="Hanna M.C."/>
            <person name="Cotton M.D."/>
            <person name="Roberts K.M."/>
            <person name="Hurst M.A."/>
            <person name="Kaine B.P."/>
            <person name="Borodovsky M."/>
            <person name="Klenk H.-P."/>
            <person name="Fraser C.M."/>
            <person name="Smith H.O."/>
            <person name="Woese C.R."/>
            <person name="Venter J.C."/>
        </authorList>
    </citation>
    <scope>NUCLEOTIDE SEQUENCE [LARGE SCALE GENOMIC DNA]</scope>
    <source>
        <strain>ATCC 43067 / DSM 2661 / JAL-1 / JCM 10045 / NBRC 100440</strain>
    </source>
</reference>
<reference key="2">
    <citation type="journal article" date="2011" name="RNA Biol.">
        <title>Distinct activities of several RNase J proteins in methanogenic archaea.</title>
        <authorList>
            <person name="Levy S."/>
            <person name="Portnoy V."/>
            <person name="Admon J."/>
            <person name="Schuster G."/>
        </authorList>
    </citation>
    <scope>FUNCTION AS AN EXORIBONUCLEASE</scope>
    <scope>FUNCTION AS AN EXODEOXYRIBONUCLEASE</scope>
    <scope>CATALYTIC ACTIVITY</scope>
    <scope>ACTIVITY REGULATION</scope>
    <scope>BIOPHYSICOCHEMICAL PROPERTIES</scope>
    <scope>POSSIBLE SUBUNIT</scope>
    <scope>MUTAGENESIS OF 83-HIS--HIS-86</scope>
    <source>
        <strain>ATCC 43067 / DSM 2661 / JAL-1 / JCM 10045 / NBRC 100440</strain>
    </source>
</reference>
<organism>
    <name type="scientific">Methanocaldococcus jannaschii (strain ATCC 43067 / DSM 2661 / JAL-1 / JCM 10045 / NBRC 100440)</name>
    <name type="common">Methanococcus jannaschii</name>
    <dbReference type="NCBI Taxonomy" id="243232"/>
    <lineage>
        <taxon>Archaea</taxon>
        <taxon>Methanobacteriati</taxon>
        <taxon>Methanobacteriota</taxon>
        <taxon>Methanomada group</taxon>
        <taxon>Methanococci</taxon>
        <taxon>Methanococcales</taxon>
        <taxon>Methanocaldococcaceae</taxon>
        <taxon>Methanocaldococcus</taxon>
    </lineage>
</organism>
<name>RNJ_METJA</name>
<feature type="chain" id="PRO_0000215275" description="Ribonuclease J">
    <location>
        <begin position="1"/>
        <end position="448"/>
    </location>
</feature>
<feature type="binding site" evidence="1">
    <location>
        <position position="81"/>
    </location>
    <ligand>
        <name>Zn(2+)</name>
        <dbReference type="ChEBI" id="CHEBI:29105"/>
        <label>1</label>
        <note>catalytic</note>
    </ligand>
</feature>
<feature type="binding site" evidence="1">
    <location>
        <position position="83"/>
    </location>
    <ligand>
        <name>Zn(2+)</name>
        <dbReference type="ChEBI" id="CHEBI:29105"/>
        <label>1</label>
        <note>catalytic</note>
    </ligand>
</feature>
<feature type="binding site" evidence="1">
    <location>
        <position position="85"/>
    </location>
    <ligand>
        <name>Zn(2+)</name>
        <dbReference type="ChEBI" id="CHEBI:29105"/>
        <label>2</label>
        <note>catalytic</note>
    </ligand>
</feature>
<feature type="binding site" evidence="1">
    <location>
        <position position="86"/>
    </location>
    <ligand>
        <name>Zn(2+)</name>
        <dbReference type="ChEBI" id="CHEBI:29105"/>
        <label>2</label>
        <note>catalytic</note>
    </ligand>
</feature>
<feature type="binding site" evidence="1">
    <location>
        <position position="151"/>
    </location>
    <ligand>
        <name>Zn(2+)</name>
        <dbReference type="ChEBI" id="CHEBI:29105"/>
        <label>1</label>
        <note>catalytic</note>
    </ligand>
</feature>
<feature type="binding site" evidence="1">
    <location>
        <position position="173"/>
    </location>
    <ligand>
        <name>Zn(2+)</name>
        <dbReference type="ChEBI" id="CHEBI:29105"/>
        <label>1</label>
        <note>catalytic</note>
    </ligand>
</feature>
<feature type="binding site" evidence="1">
    <location>
        <position position="173"/>
    </location>
    <ligand>
        <name>Zn(2+)</name>
        <dbReference type="ChEBI" id="CHEBI:29105"/>
        <label>2</label>
        <note>catalytic</note>
    </ligand>
</feature>
<feature type="binding site" evidence="1">
    <location>
        <begin position="383"/>
        <end position="387"/>
    </location>
    <ligand>
        <name>substrate</name>
    </ligand>
</feature>
<feature type="binding site" evidence="1">
    <location>
        <position position="409"/>
    </location>
    <ligand>
        <name>Zn(2+)</name>
        <dbReference type="ChEBI" id="CHEBI:29105"/>
        <label>2</label>
        <note>catalytic</note>
    </ligand>
</feature>
<feature type="mutagenesis site" description="Greatly decreased RNase activity." evidence="2">
    <original>HLDH</original>
    <variation>ALKA</variation>
    <location>
        <begin position="83"/>
        <end position="86"/>
    </location>
</feature>
<keyword id="KW-0963">Cytoplasm</keyword>
<keyword id="KW-0269">Exonuclease</keyword>
<keyword id="KW-0378">Hydrolase</keyword>
<keyword id="KW-0479">Metal-binding</keyword>
<keyword id="KW-0540">Nuclease</keyword>
<keyword id="KW-1185">Reference proteome</keyword>
<keyword id="KW-0694">RNA-binding</keyword>
<keyword id="KW-0862">Zinc</keyword>
<dbReference type="EC" id="3.1.-.-" evidence="1 2"/>
<dbReference type="EMBL" id="L77117">
    <property type="protein sequence ID" value="AAB98866.1"/>
    <property type="molecule type" value="Genomic_DNA"/>
</dbReference>
<dbReference type="PIR" id="E64407">
    <property type="entry name" value="E64407"/>
</dbReference>
<dbReference type="RefSeq" id="WP_010870376.1">
    <property type="nucleotide sequence ID" value="NC_000909.1"/>
</dbReference>
<dbReference type="SMR" id="Q58271"/>
<dbReference type="FunCoup" id="Q58271">
    <property type="interactions" value="1"/>
</dbReference>
<dbReference type="STRING" id="243232.MJ_0861"/>
<dbReference type="PaxDb" id="243232-MJ_0861"/>
<dbReference type="EnsemblBacteria" id="AAB98866">
    <property type="protein sequence ID" value="AAB98866"/>
    <property type="gene ID" value="MJ_0861"/>
</dbReference>
<dbReference type="GeneID" id="1451750"/>
<dbReference type="KEGG" id="mja:MJ_0861"/>
<dbReference type="eggNOG" id="arCOG00546">
    <property type="taxonomic scope" value="Archaea"/>
</dbReference>
<dbReference type="HOGENOM" id="CLU_008727_4_1_2"/>
<dbReference type="InParanoid" id="Q58271"/>
<dbReference type="OrthoDB" id="63419at2157"/>
<dbReference type="PhylomeDB" id="Q58271"/>
<dbReference type="Proteomes" id="UP000000805">
    <property type="component" value="Chromosome"/>
</dbReference>
<dbReference type="GO" id="GO:0005737">
    <property type="term" value="C:cytoplasm"/>
    <property type="evidence" value="ECO:0007669"/>
    <property type="project" value="UniProtKB-SubCell"/>
</dbReference>
<dbReference type="GO" id="GO:0004534">
    <property type="term" value="F:5'-3' RNA exonuclease activity"/>
    <property type="evidence" value="ECO:0007669"/>
    <property type="project" value="UniProtKB-UniRule"/>
</dbReference>
<dbReference type="GO" id="GO:0003723">
    <property type="term" value="F:RNA binding"/>
    <property type="evidence" value="ECO:0007669"/>
    <property type="project" value="UniProtKB-KW"/>
</dbReference>
<dbReference type="GO" id="GO:0004532">
    <property type="term" value="F:RNA exonuclease activity"/>
    <property type="evidence" value="ECO:0000314"/>
    <property type="project" value="UniProtKB"/>
</dbReference>
<dbReference type="GO" id="GO:0045145">
    <property type="term" value="F:single-stranded DNA 5'-3' DNA exonuclease activity"/>
    <property type="evidence" value="ECO:0000314"/>
    <property type="project" value="UniProtKB"/>
</dbReference>
<dbReference type="GO" id="GO:0008270">
    <property type="term" value="F:zinc ion binding"/>
    <property type="evidence" value="ECO:0007669"/>
    <property type="project" value="UniProtKB-UniRule"/>
</dbReference>
<dbReference type="GO" id="GO:0006401">
    <property type="term" value="P:RNA catabolic process"/>
    <property type="evidence" value="ECO:0007669"/>
    <property type="project" value="UniProtKB-UniRule"/>
</dbReference>
<dbReference type="CDD" id="cd07714">
    <property type="entry name" value="RNaseJ_MBL-fold"/>
    <property type="match status" value="1"/>
</dbReference>
<dbReference type="Gene3D" id="3.40.50.10710">
    <property type="entry name" value="Metallo-hydrolase/oxidoreductase"/>
    <property type="match status" value="1"/>
</dbReference>
<dbReference type="Gene3D" id="3.60.15.10">
    <property type="entry name" value="Ribonuclease Z/Hydroxyacylglutathione hydrolase-like"/>
    <property type="match status" value="1"/>
</dbReference>
<dbReference type="HAMAP" id="MF_01492">
    <property type="entry name" value="RNase_J_arch"/>
    <property type="match status" value="1"/>
</dbReference>
<dbReference type="InterPro" id="IPR001279">
    <property type="entry name" value="Metallo-B-lactamas"/>
</dbReference>
<dbReference type="InterPro" id="IPR036866">
    <property type="entry name" value="RibonucZ/Hydroxyglut_hydro"/>
</dbReference>
<dbReference type="InterPro" id="IPR011108">
    <property type="entry name" value="RMMBL"/>
</dbReference>
<dbReference type="InterPro" id="IPR004613">
    <property type="entry name" value="RNase_J"/>
</dbReference>
<dbReference type="InterPro" id="IPR042173">
    <property type="entry name" value="RNase_J_2"/>
</dbReference>
<dbReference type="InterPro" id="IPR030879">
    <property type="entry name" value="RNase_J_arc"/>
</dbReference>
<dbReference type="InterPro" id="IPR055132">
    <property type="entry name" value="RNase_J_b_CASP"/>
</dbReference>
<dbReference type="InterPro" id="IPR001587">
    <property type="entry name" value="RNase_J_CS"/>
</dbReference>
<dbReference type="NCBIfam" id="TIGR00649">
    <property type="entry name" value="MG423"/>
    <property type="match status" value="1"/>
</dbReference>
<dbReference type="PANTHER" id="PTHR43694">
    <property type="entry name" value="RIBONUCLEASE J"/>
    <property type="match status" value="1"/>
</dbReference>
<dbReference type="PANTHER" id="PTHR43694:SF1">
    <property type="entry name" value="RIBONUCLEASE J"/>
    <property type="match status" value="1"/>
</dbReference>
<dbReference type="Pfam" id="PF00753">
    <property type="entry name" value="Lactamase_B"/>
    <property type="match status" value="1"/>
</dbReference>
<dbReference type="Pfam" id="PF07521">
    <property type="entry name" value="RMMBL"/>
    <property type="match status" value="1"/>
</dbReference>
<dbReference type="Pfam" id="PF22505">
    <property type="entry name" value="RNase_J_b_CASP"/>
    <property type="match status" value="1"/>
</dbReference>
<dbReference type="SMART" id="SM00849">
    <property type="entry name" value="Lactamase_B"/>
    <property type="match status" value="1"/>
</dbReference>
<dbReference type="SUPFAM" id="SSF56281">
    <property type="entry name" value="Metallo-hydrolase/oxidoreductase"/>
    <property type="match status" value="1"/>
</dbReference>
<dbReference type="PROSITE" id="PS01292">
    <property type="entry name" value="UPF0036"/>
    <property type="match status" value="1"/>
</dbReference>
<evidence type="ECO:0000255" key="1">
    <source>
        <dbReference type="HAMAP-Rule" id="MF_01492"/>
    </source>
</evidence>
<evidence type="ECO:0000269" key="2">
    <source>
    </source>
</evidence>
<evidence type="ECO:0000303" key="3">
    <source>
    </source>
</evidence>
<evidence type="ECO:0000305" key="4">
    <source>
    </source>
</evidence>